<sequence>MDNCELVGSRIRLGLDMDGVLFDFDSKIMDKFAEMGIQFTDVKEMSSAVEFDKSIKQRHREIYHVPGFFANLPPIKGAVNAYKYLKSLTDINNNKIFEIFIVSTPSFRNQTCCIDKINDLNKYFGPELLEKVFFCRDKTLVNLDILIDDKPEIRGFNGSSECLSDSNSVTNKMSFQHIRFHSDMYKYSDDVPIINNWIDGTYIDVVKNVCVDKNLLREVVV</sequence>
<feature type="chain" id="PRO_0000253214" description="Putative 5'(3')-deoxyribonucleotidase R824">
    <location>
        <begin position="1"/>
        <end position="221"/>
    </location>
</feature>
<feature type="active site" description="Nucleophile" evidence="1">
    <location>
        <position position="18"/>
    </location>
</feature>
<feature type="binding site" evidence="1">
    <location>
        <position position="16"/>
    </location>
    <ligand>
        <name>Mg(2+)</name>
        <dbReference type="ChEBI" id="CHEBI:18420"/>
    </ligand>
</feature>
<feature type="binding site" evidence="1">
    <location>
        <position position="18"/>
    </location>
    <ligand>
        <name>Mg(2+)</name>
        <dbReference type="ChEBI" id="CHEBI:18420"/>
    </ligand>
</feature>
<feature type="binding site" evidence="1">
    <location>
        <position position="18"/>
    </location>
    <ligand>
        <name>phosphate</name>
        <dbReference type="ChEBI" id="CHEBI:43474"/>
    </ligand>
</feature>
<feature type="binding site" evidence="1">
    <location>
        <position position="103"/>
    </location>
    <ligand>
        <name>phosphate</name>
        <dbReference type="ChEBI" id="CHEBI:43474"/>
    </ligand>
</feature>
<feature type="binding site" evidence="1">
    <location>
        <position position="138"/>
    </location>
    <ligand>
        <name>phosphate</name>
        <dbReference type="ChEBI" id="CHEBI:43474"/>
    </ligand>
</feature>
<feature type="binding site" evidence="1">
    <location>
        <position position="149"/>
    </location>
    <ligand>
        <name>Mg(2+)</name>
        <dbReference type="ChEBI" id="CHEBI:18420"/>
    </ligand>
</feature>
<accession>Q5UQH3</accession>
<organism>
    <name type="scientific">Acanthamoeba polyphaga mimivirus</name>
    <name type="common">APMV</name>
    <dbReference type="NCBI Taxonomy" id="212035"/>
    <lineage>
        <taxon>Viruses</taxon>
        <taxon>Varidnaviria</taxon>
        <taxon>Bamfordvirae</taxon>
        <taxon>Nucleocytoviricota</taxon>
        <taxon>Megaviricetes</taxon>
        <taxon>Imitervirales</taxon>
        <taxon>Mimiviridae</taxon>
        <taxon>Megamimivirinae</taxon>
        <taxon>Mimivirus</taxon>
        <taxon>Mimivirus bradfordmassiliense</taxon>
    </lineage>
</organism>
<reference key="1">
    <citation type="journal article" date="2004" name="Science">
        <title>The 1.2-megabase genome sequence of Mimivirus.</title>
        <authorList>
            <person name="Raoult D."/>
            <person name="Audic S."/>
            <person name="Robert C."/>
            <person name="Abergel C."/>
            <person name="Renesto P."/>
            <person name="Ogata H."/>
            <person name="La Scola B."/>
            <person name="Susan M."/>
            <person name="Claverie J.-M."/>
        </authorList>
    </citation>
    <scope>NUCLEOTIDE SEQUENCE [LARGE SCALE GENOMIC DNA]</scope>
    <source>
        <strain>Rowbotham-Bradford</strain>
    </source>
</reference>
<dbReference type="EC" id="3.1.3.-"/>
<dbReference type="EMBL" id="AY653733">
    <property type="protein sequence ID" value="AAV51084.1"/>
    <property type="molecule type" value="Genomic_DNA"/>
</dbReference>
<dbReference type="SMR" id="Q5UQH3"/>
<dbReference type="KEGG" id="vg:9925487"/>
<dbReference type="OrthoDB" id="10493at10239"/>
<dbReference type="Proteomes" id="UP000001134">
    <property type="component" value="Genome"/>
</dbReference>
<dbReference type="GO" id="GO:0008253">
    <property type="term" value="F:5'-nucleotidase activity"/>
    <property type="evidence" value="ECO:0007669"/>
    <property type="project" value="InterPro"/>
</dbReference>
<dbReference type="GO" id="GO:0046872">
    <property type="term" value="F:metal ion binding"/>
    <property type="evidence" value="ECO:0007669"/>
    <property type="project" value="UniProtKB-KW"/>
</dbReference>
<dbReference type="GO" id="GO:0000166">
    <property type="term" value="F:nucleotide binding"/>
    <property type="evidence" value="ECO:0007669"/>
    <property type="project" value="UniProtKB-KW"/>
</dbReference>
<dbReference type="GO" id="GO:0009223">
    <property type="term" value="P:pyrimidine deoxyribonucleotide catabolic process"/>
    <property type="evidence" value="ECO:0007669"/>
    <property type="project" value="TreeGrafter"/>
</dbReference>
<dbReference type="Gene3D" id="1.10.40.40">
    <property type="entry name" value="Deoxyribonucleotidase, domain 2"/>
    <property type="match status" value="1"/>
</dbReference>
<dbReference type="Gene3D" id="3.40.50.1000">
    <property type="entry name" value="HAD superfamily/HAD-like"/>
    <property type="match status" value="1"/>
</dbReference>
<dbReference type="InterPro" id="IPR010708">
    <property type="entry name" value="5'(3')-deoxyribonucleotidase"/>
</dbReference>
<dbReference type="InterPro" id="IPR036412">
    <property type="entry name" value="HAD-like_sf"/>
</dbReference>
<dbReference type="InterPro" id="IPR023214">
    <property type="entry name" value="HAD_sf"/>
</dbReference>
<dbReference type="PANTHER" id="PTHR16504">
    <property type="entry name" value="5'(3')-DEOXYRIBONUCLEOTIDASE"/>
    <property type="match status" value="1"/>
</dbReference>
<dbReference type="PANTHER" id="PTHR16504:SF4">
    <property type="entry name" value="5'(3')-DEOXYRIBONUCLEOTIDASE"/>
    <property type="match status" value="1"/>
</dbReference>
<dbReference type="Pfam" id="PF06941">
    <property type="entry name" value="NT5C"/>
    <property type="match status" value="1"/>
</dbReference>
<dbReference type="SFLD" id="SFLDG01145">
    <property type="entry name" value="C1.2.1"/>
    <property type="match status" value="1"/>
</dbReference>
<dbReference type="SFLD" id="SFLDG01126">
    <property type="entry name" value="C1.2:_Nucleotidase_Like"/>
    <property type="match status" value="1"/>
</dbReference>
<dbReference type="SUPFAM" id="SSF56784">
    <property type="entry name" value="HAD-like"/>
    <property type="match status" value="1"/>
</dbReference>
<proteinExistence type="inferred from homology"/>
<organismHost>
    <name type="scientific">Acanthamoeba polyphaga</name>
    <name type="common">Amoeba</name>
    <dbReference type="NCBI Taxonomy" id="5757"/>
</organismHost>
<keyword id="KW-0378">Hydrolase</keyword>
<keyword id="KW-0460">Magnesium</keyword>
<keyword id="KW-0479">Metal-binding</keyword>
<keyword id="KW-0546">Nucleotide metabolism</keyword>
<keyword id="KW-0547">Nucleotide-binding</keyword>
<keyword id="KW-1185">Reference proteome</keyword>
<evidence type="ECO:0000250" key="1"/>
<evidence type="ECO:0000305" key="2"/>
<protein>
    <recommendedName>
        <fullName>Putative 5'(3')-deoxyribonucleotidase R824</fullName>
        <ecNumber>3.1.3.-</ecNumber>
    </recommendedName>
</protein>
<gene>
    <name type="ordered locus">MIMI_R824</name>
</gene>
<name>53DR_MIMIV</name>
<comment type="function">
    <text evidence="2">Dephosphorylates the 5' and 2'(3')-phosphates of deoxyribonucleotides.</text>
</comment>
<comment type="cofactor">
    <cofactor evidence="1">
        <name>Mg(2+)</name>
        <dbReference type="ChEBI" id="CHEBI:18420"/>
    </cofactor>
</comment>
<comment type="similarity">
    <text evidence="2">Belongs to the 5'(3')-deoxyribonucleotidase family.</text>
</comment>